<sequence length="242" mass="26340">MTGKVILVGAGPGDPELITIKGLKAIKEADVVVYDDLISKELLNYAKKDAELIYVGKRKGKHSFKQEEINKILVEKAKEGKLVVRLKGGDPFVFGRGGEEILELKKHNIPYEVIPGITSAIAVPEVAGIPVTHRKVATSFTVVTGHEAEDKKEKQVDLSKLNADTIVILMGITNLENLVKELLQNPKRSKETPVAIIMEGTTKNQRVIKGTLGDIVEKAKKENARPPGVIVVGEVVNVLDSQ</sequence>
<organism>
    <name type="scientific">Methanocaldococcus jannaschii (strain ATCC 43067 / DSM 2661 / JAL-1 / JCM 10045 / NBRC 100440)</name>
    <name type="common">Methanococcus jannaschii</name>
    <dbReference type="NCBI Taxonomy" id="243232"/>
    <lineage>
        <taxon>Archaea</taxon>
        <taxon>Methanobacteriati</taxon>
        <taxon>Methanobacteriota</taxon>
        <taxon>Methanomada group</taxon>
        <taxon>Methanococci</taxon>
        <taxon>Methanococcales</taxon>
        <taxon>Methanocaldococcaceae</taxon>
        <taxon>Methanocaldococcus</taxon>
    </lineage>
</organism>
<accession>Q58375</accession>
<protein>
    <recommendedName>
        <fullName>Uroporphyrinogen-III C-methyltransferase</fullName>
        <shortName>Urogen III methylase</shortName>
        <ecNumber evidence="2">2.1.1.107</ecNumber>
    </recommendedName>
    <alternativeName>
        <fullName>S-adenosyl-L-methionine:uroporphyrinogen III methyltransferase</fullName>
        <shortName>SUMT</shortName>
    </alternativeName>
    <alternativeName>
        <fullName>Uroporphyrinogen III methylase</fullName>
        <shortName>UROM</shortName>
    </alternativeName>
</protein>
<dbReference type="EC" id="2.1.1.107" evidence="2"/>
<dbReference type="EMBL" id="L77117">
    <property type="protein sequence ID" value="AAB98967.1"/>
    <property type="status" value="ALT_INIT"/>
    <property type="molecule type" value="Genomic_DNA"/>
</dbReference>
<dbReference type="PIR" id="E64420">
    <property type="entry name" value="E64420"/>
</dbReference>
<dbReference type="RefSeq" id="WP_064496681.1">
    <property type="nucleotide sequence ID" value="NC_000909.1"/>
</dbReference>
<dbReference type="SMR" id="Q58375"/>
<dbReference type="FunCoup" id="Q58375">
    <property type="interactions" value="112"/>
</dbReference>
<dbReference type="STRING" id="243232.MJ_0965"/>
<dbReference type="PaxDb" id="243232-MJ_0965"/>
<dbReference type="EnsemblBacteria" id="AAB98967">
    <property type="protein sequence ID" value="AAB98967"/>
    <property type="gene ID" value="MJ_0965"/>
</dbReference>
<dbReference type="GeneID" id="1451863"/>
<dbReference type="KEGG" id="mja:MJ_0965"/>
<dbReference type="eggNOG" id="arCOG00644">
    <property type="taxonomic scope" value="Archaea"/>
</dbReference>
<dbReference type="HOGENOM" id="CLU_011276_7_0_2"/>
<dbReference type="InParanoid" id="Q58375"/>
<dbReference type="OrthoDB" id="24444at2157"/>
<dbReference type="PhylomeDB" id="Q58375"/>
<dbReference type="UniPathway" id="UPA00148">
    <property type="reaction ID" value="UER00211"/>
</dbReference>
<dbReference type="Proteomes" id="UP000000805">
    <property type="component" value="Chromosome"/>
</dbReference>
<dbReference type="GO" id="GO:0004851">
    <property type="term" value="F:uroporphyrin-III C-methyltransferase activity"/>
    <property type="evidence" value="ECO:0000318"/>
    <property type="project" value="GO_Central"/>
</dbReference>
<dbReference type="GO" id="GO:0009236">
    <property type="term" value="P:cobalamin biosynthetic process"/>
    <property type="evidence" value="ECO:0007669"/>
    <property type="project" value="UniProtKB-UniPathway"/>
</dbReference>
<dbReference type="GO" id="GO:0032259">
    <property type="term" value="P:methylation"/>
    <property type="evidence" value="ECO:0007669"/>
    <property type="project" value="UniProtKB-KW"/>
</dbReference>
<dbReference type="GO" id="GO:0019354">
    <property type="term" value="P:siroheme biosynthetic process"/>
    <property type="evidence" value="ECO:0000318"/>
    <property type="project" value="GO_Central"/>
</dbReference>
<dbReference type="CDD" id="cd11642">
    <property type="entry name" value="SUMT"/>
    <property type="match status" value="1"/>
</dbReference>
<dbReference type="FunFam" id="3.30.950.10:FF:000001">
    <property type="entry name" value="Siroheme synthase"/>
    <property type="match status" value="1"/>
</dbReference>
<dbReference type="FunFam" id="3.40.1010.10:FF:000001">
    <property type="entry name" value="Siroheme synthase"/>
    <property type="match status" value="1"/>
</dbReference>
<dbReference type="Gene3D" id="3.40.1010.10">
    <property type="entry name" value="Cobalt-precorrin-4 Transmethylase, Domain 1"/>
    <property type="match status" value="1"/>
</dbReference>
<dbReference type="Gene3D" id="3.30.950.10">
    <property type="entry name" value="Methyltransferase, Cobalt-precorrin-4 Transmethylase, Domain 2"/>
    <property type="match status" value="1"/>
</dbReference>
<dbReference type="InterPro" id="IPR000878">
    <property type="entry name" value="4pyrrol_Mease"/>
</dbReference>
<dbReference type="InterPro" id="IPR035996">
    <property type="entry name" value="4pyrrol_Methylase_sf"/>
</dbReference>
<dbReference type="InterPro" id="IPR014777">
    <property type="entry name" value="4pyrrole_Mease_sub1"/>
</dbReference>
<dbReference type="InterPro" id="IPR014776">
    <property type="entry name" value="4pyrrole_Mease_sub2"/>
</dbReference>
<dbReference type="InterPro" id="IPR006366">
    <property type="entry name" value="CobA/CysG_C"/>
</dbReference>
<dbReference type="InterPro" id="IPR050161">
    <property type="entry name" value="Siro_Cobalamin_biosynth"/>
</dbReference>
<dbReference type="InterPro" id="IPR003043">
    <property type="entry name" value="Uropor_MeTrfase_CS"/>
</dbReference>
<dbReference type="NCBIfam" id="TIGR01469">
    <property type="entry name" value="cobA_cysG_Cterm"/>
    <property type="match status" value="1"/>
</dbReference>
<dbReference type="NCBIfam" id="NF004790">
    <property type="entry name" value="PRK06136.1"/>
    <property type="match status" value="1"/>
</dbReference>
<dbReference type="PANTHER" id="PTHR45790:SF3">
    <property type="entry name" value="S-ADENOSYL-L-METHIONINE-DEPENDENT UROPORPHYRINOGEN III METHYLTRANSFERASE, CHLOROPLASTIC"/>
    <property type="match status" value="1"/>
</dbReference>
<dbReference type="PANTHER" id="PTHR45790">
    <property type="entry name" value="SIROHEME SYNTHASE-RELATED"/>
    <property type="match status" value="1"/>
</dbReference>
<dbReference type="Pfam" id="PF00590">
    <property type="entry name" value="TP_methylase"/>
    <property type="match status" value="1"/>
</dbReference>
<dbReference type="SUPFAM" id="SSF53790">
    <property type="entry name" value="Tetrapyrrole methylase"/>
    <property type="match status" value="1"/>
</dbReference>
<dbReference type="PROSITE" id="PS00839">
    <property type="entry name" value="SUMT_1"/>
    <property type="match status" value="1"/>
</dbReference>
<dbReference type="PROSITE" id="PS00840">
    <property type="entry name" value="SUMT_2"/>
    <property type="match status" value="1"/>
</dbReference>
<comment type="function">
    <text evidence="2">Catalyzes the two successive C-2 and C-7 methylation reactions involved in the conversion of uroporphyrinogen III to precorrin-2 via the intermediate formation of precorrin-1. It is a step in the biosynthesis of both cobalamin (vitamin B12) and coenzyme F430.</text>
</comment>
<comment type="catalytic activity">
    <reaction evidence="2">
        <text>uroporphyrinogen III + 2 S-adenosyl-L-methionine = precorrin-2 + 2 S-adenosyl-L-homocysteine + H(+)</text>
        <dbReference type="Rhea" id="RHEA:32459"/>
        <dbReference type="ChEBI" id="CHEBI:15378"/>
        <dbReference type="ChEBI" id="CHEBI:57308"/>
        <dbReference type="ChEBI" id="CHEBI:57856"/>
        <dbReference type="ChEBI" id="CHEBI:58827"/>
        <dbReference type="ChEBI" id="CHEBI:59789"/>
        <dbReference type="EC" id="2.1.1.107"/>
    </reaction>
    <physiologicalReaction direction="left-to-right" evidence="2">
        <dbReference type="Rhea" id="RHEA:32460"/>
    </physiologicalReaction>
</comment>
<comment type="pathway">
    <text evidence="2">Cofactor biosynthesis; adenosylcobalamin biosynthesis; precorrin-2 from uroporphyrinogen III: step 1/1.</text>
</comment>
<comment type="subunit">
    <text evidence="2">Homodimer.</text>
</comment>
<comment type="similarity">
    <text evidence="3">Belongs to the precorrin methyltransferase family.</text>
</comment>
<comment type="sequence caution" evidence="3">
    <conflict type="erroneous initiation">
        <sequence resource="EMBL-CDS" id="AAB98967"/>
    </conflict>
</comment>
<name>SUMT_METJA</name>
<evidence type="ECO:0000250" key="1">
    <source>
        <dbReference type="UniProtKB" id="P21631"/>
    </source>
</evidence>
<evidence type="ECO:0000250" key="2">
    <source>
        <dbReference type="UniProtKB" id="P29564"/>
    </source>
</evidence>
<evidence type="ECO:0000305" key="3"/>
<keyword id="KW-0169">Cobalamin biosynthesis</keyword>
<keyword id="KW-0489">Methyltransferase</keyword>
<keyword id="KW-0627">Porphyrin biosynthesis</keyword>
<keyword id="KW-1185">Reference proteome</keyword>
<keyword id="KW-0949">S-adenosyl-L-methionine</keyword>
<keyword id="KW-0808">Transferase</keyword>
<proteinExistence type="inferred from homology"/>
<reference key="1">
    <citation type="journal article" date="1996" name="Science">
        <title>Complete genome sequence of the methanogenic archaeon, Methanococcus jannaschii.</title>
        <authorList>
            <person name="Bult C.J."/>
            <person name="White O."/>
            <person name="Olsen G.J."/>
            <person name="Zhou L."/>
            <person name="Fleischmann R.D."/>
            <person name="Sutton G.G."/>
            <person name="Blake J.A."/>
            <person name="FitzGerald L.M."/>
            <person name="Clayton R.A."/>
            <person name="Gocayne J.D."/>
            <person name="Kerlavage A.R."/>
            <person name="Dougherty B.A."/>
            <person name="Tomb J.-F."/>
            <person name="Adams M.D."/>
            <person name="Reich C.I."/>
            <person name="Overbeek R."/>
            <person name="Kirkness E.F."/>
            <person name="Weinstock K.G."/>
            <person name="Merrick J.M."/>
            <person name="Glodek A."/>
            <person name="Scott J.L."/>
            <person name="Geoghagen N.S.M."/>
            <person name="Weidman J.F."/>
            <person name="Fuhrmann J.L."/>
            <person name="Nguyen D."/>
            <person name="Utterback T.R."/>
            <person name="Kelley J.M."/>
            <person name="Peterson J.D."/>
            <person name="Sadow P.W."/>
            <person name="Hanna M.C."/>
            <person name="Cotton M.D."/>
            <person name="Roberts K.M."/>
            <person name="Hurst M.A."/>
            <person name="Kaine B.P."/>
            <person name="Borodovsky M."/>
            <person name="Klenk H.-P."/>
            <person name="Fraser C.M."/>
            <person name="Smith H.O."/>
            <person name="Woese C.R."/>
            <person name="Venter J.C."/>
        </authorList>
    </citation>
    <scope>NUCLEOTIDE SEQUENCE [LARGE SCALE GENOMIC DNA]</scope>
    <source>
        <strain>ATCC 43067 / DSM 2661 / JAL-1 / JCM 10045 / NBRC 100440</strain>
    </source>
</reference>
<gene>
    <name type="primary">cobA</name>
    <name type="synonym">corA</name>
    <name type="ordered locus">MJ0965</name>
</gene>
<feature type="chain" id="PRO_0000150371" description="Uroporphyrinogen-III C-methyltransferase">
    <location>
        <begin position="1"/>
        <end position="242"/>
    </location>
</feature>
<feature type="binding site" evidence="1">
    <location>
        <position position="12"/>
    </location>
    <ligand>
        <name>S-adenosyl-L-homocysteine</name>
        <dbReference type="ChEBI" id="CHEBI:57856"/>
    </ligand>
</feature>
<feature type="binding site" evidence="1">
    <location>
        <begin position="88"/>
        <end position="90"/>
    </location>
    <ligand>
        <name>S-adenosyl-L-homocysteine</name>
        <dbReference type="ChEBI" id="CHEBI:57856"/>
    </ligand>
</feature>
<feature type="binding site" evidence="1">
    <location>
        <begin position="118"/>
        <end position="119"/>
    </location>
    <ligand>
        <name>S-adenosyl-L-homocysteine</name>
        <dbReference type="ChEBI" id="CHEBI:57856"/>
    </ligand>
</feature>
<feature type="binding site" evidence="1">
    <location>
        <position position="170"/>
    </location>
    <ligand>
        <name>S-adenosyl-L-homocysteine</name>
        <dbReference type="ChEBI" id="CHEBI:57856"/>
    </ligand>
</feature>